<evidence type="ECO:0000255" key="1">
    <source>
        <dbReference type="HAMAP-Rule" id="MF_01558"/>
    </source>
</evidence>
<evidence type="ECO:0000255" key="2">
    <source>
        <dbReference type="PROSITE-ProRule" id="PRU01083"/>
    </source>
</evidence>
<dbReference type="EC" id="3.5.4.5" evidence="1"/>
<dbReference type="EMBL" id="CU928160">
    <property type="protein sequence ID" value="CAQ99065.1"/>
    <property type="molecule type" value="Genomic_DNA"/>
</dbReference>
<dbReference type="RefSeq" id="WP_000553555.1">
    <property type="nucleotide sequence ID" value="NC_011741.1"/>
</dbReference>
<dbReference type="SMR" id="B7M4Y8"/>
<dbReference type="GeneID" id="93775039"/>
<dbReference type="KEGG" id="ecr:ECIAI1_2220"/>
<dbReference type="HOGENOM" id="CLU_052424_0_0_6"/>
<dbReference type="GO" id="GO:0005829">
    <property type="term" value="C:cytosol"/>
    <property type="evidence" value="ECO:0007669"/>
    <property type="project" value="TreeGrafter"/>
</dbReference>
<dbReference type="GO" id="GO:0004126">
    <property type="term" value="F:cytidine deaminase activity"/>
    <property type="evidence" value="ECO:0007669"/>
    <property type="project" value="UniProtKB-UniRule"/>
</dbReference>
<dbReference type="GO" id="GO:0042802">
    <property type="term" value="F:identical protein binding"/>
    <property type="evidence" value="ECO:0007669"/>
    <property type="project" value="UniProtKB-ARBA"/>
</dbReference>
<dbReference type="GO" id="GO:0008270">
    <property type="term" value="F:zinc ion binding"/>
    <property type="evidence" value="ECO:0007669"/>
    <property type="project" value="UniProtKB-UniRule"/>
</dbReference>
<dbReference type="GO" id="GO:0009972">
    <property type="term" value="P:cytidine deamination"/>
    <property type="evidence" value="ECO:0007669"/>
    <property type="project" value="InterPro"/>
</dbReference>
<dbReference type="CDD" id="cd01283">
    <property type="entry name" value="cytidine_deaminase"/>
    <property type="match status" value="2"/>
</dbReference>
<dbReference type="FunFam" id="3.40.140.10:FF:000006">
    <property type="entry name" value="Cytidine deaminase"/>
    <property type="match status" value="1"/>
</dbReference>
<dbReference type="FunFam" id="3.40.140.10:FF:000007">
    <property type="entry name" value="Cytidine deaminase"/>
    <property type="match status" value="1"/>
</dbReference>
<dbReference type="Gene3D" id="3.40.140.10">
    <property type="entry name" value="Cytidine Deaminase, domain 2"/>
    <property type="match status" value="2"/>
</dbReference>
<dbReference type="HAMAP" id="MF_01558">
    <property type="entry name" value="Cyt_deam"/>
    <property type="match status" value="1"/>
</dbReference>
<dbReference type="InterPro" id="IPR016192">
    <property type="entry name" value="APOBEC/CMP_deaminase_Zn-bd"/>
</dbReference>
<dbReference type="InterPro" id="IPR002125">
    <property type="entry name" value="CMP_dCMP_dom"/>
</dbReference>
<dbReference type="InterPro" id="IPR013171">
    <property type="entry name" value="Cyd/dCyd_deaminase_Zn-bd"/>
</dbReference>
<dbReference type="InterPro" id="IPR050202">
    <property type="entry name" value="Cyt/Deoxycyt_deaminase"/>
</dbReference>
<dbReference type="InterPro" id="IPR006263">
    <property type="entry name" value="Cyt_deam_dimer"/>
</dbReference>
<dbReference type="InterPro" id="IPR016193">
    <property type="entry name" value="Cytidine_deaminase-like"/>
</dbReference>
<dbReference type="InterPro" id="IPR020797">
    <property type="entry name" value="Cytidine_deaminase_bacteria"/>
</dbReference>
<dbReference type="NCBIfam" id="TIGR01355">
    <property type="entry name" value="cyt_deam_dimer"/>
    <property type="match status" value="1"/>
</dbReference>
<dbReference type="NCBIfam" id="NF006537">
    <property type="entry name" value="PRK09027.1"/>
    <property type="match status" value="1"/>
</dbReference>
<dbReference type="PANTHER" id="PTHR11644">
    <property type="entry name" value="CYTIDINE DEAMINASE"/>
    <property type="match status" value="1"/>
</dbReference>
<dbReference type="PANTHER" id="PTHR11644:SF2">
    <property type="entry name" value="CYTIDINE DEAMINASE"/>
    <property type="match status" value="1"/>
</dbReference>
<dbReference type="Pfam" id="PF00383">
    <property type="entry name" value="dCMP_cyt_deam_1"/>
    <property type="match status" value="1"/>
</dbReference>
<dbReference type="Pfam" id="PF08211">
    <property type="entry name" value="dCMP_cyt_deam_2"/>
    <property type="match status" value="1"/>
</dbReference>
<dbReference type="PIRSF" id="PIRSF006334">
    <property type="entry name" value="Cdd_plus_pseudo"/>
    <property type="match status" value="1"/>
</dbReference>
<dbReference type="SUPFAM" id="SSF53927">
    <property type="entry name" value="Cytidine deaminase-like"/>
    <property type="match status" value="2"/>
</dbReference>
<dbReference type="PROSITE" id="PS00903">
    <property type="entry name" value="CYT_DCMP_DEAMINASES_1"/>
    <property type="match status" value="1"/>
</dbReference>
<dbReference type="PROSITE" id="PS51747">
    <property type="entry name" value="CYT_DCMP_DEAMINASES_2"/>
    <property type="match status" value="2"/>
</dbReference>
<sequence>MHPRFQTAFAQLADNLQSALEPILADKYFPALLTGEQVSSLKSATGLDEDALAFALLPLAAACARTPLSNFNVGAIARGVSGTWYFGANMEFIGATMQQTVHAEQSAISHAWLSGEKALAAITVNYTPCGHCRQFMNELNSGLDLRIHLPGREAHALRDYLPDAFGPKDLEIKTLLMDEQDHGYALTGDALSQAAIAAANRSHMPYSKSPSGVALECKDGRIFSGSYAENAAFNPTLPPLQGALILLNLKGYDYPDIQRAVLAEKADAPLIQWDATSATLKALGCHSIDRVLLA</sequence>
<proteinExistence type="inferred from homology"/>
<reference key="1">
    <citation type="journal article" date="2009" name="PLoS Genet.">
        <title>Organised genome dynamics in the Escherichia coli species results in highly diverse adaptive paths.</title>
        <authorList>
            <person name="Touchon M."/>
            <person name="Hoede C."/>
            <person name="Tenaillon O."/>
            <person name="Barbe V."/>
            <person name="Baeriswyl S."/>
            <person name="Bidet P."/>
            <person name="Bingen E."/>
            <person name="Bonacorsi S."/>
            <person name="Bouchier C."/>
            <person name="Bouvet O."/>
            <person name="Calteau A."/>
            <person name="Chiapello H."/>
            <person name="Clermont O."/>
            <person name="Cruveiller S."/>
            <person name="Danchin A."/>
            <person name="Diard M."/>
            <person name="Dossat C."/>
            <person name="Karoui M.E."/>
            <person name="Frapy E."/>
            <person name="Garry L."/>
            <person name="Ghigo J.M."/>
            <person name="Gilles A.M."/>
            <person name="Johnson J."/>
            <person name="Le Bouguenec C."/>
            <person name="Lescat M."/>
            <person name="Mangenot S."/>
            <person name="Martinez-Jehanne V."/>
            <person name="Matic I."/>
            <person name="Nassif X."/>
            <person name="Oztas S."/>
            <person name="Petit M.A."/>
            <person name="Pichon C."/>
            <person name="Rouy Z."/>
            <person name="Ruf C.S."/>
            <person name="Schneider D."/>
            <person name="Tourret J."/>
            <person name="Vacherie B."/>
            <person name="Vallenet D."/>
            <person name="Medigue C."/>
            <person name="Rocha E.P.C."/>
            <person name="Denamur E."/>
        </authorList>
    </citation>
    <scope>NUCLEOTIDE SEQUENCE [LARGE SCALE GENOMIC DNA]</scope>
    <source>
        <strain>IAI1</strain>
    </source>
</reference>
<organism>
    <name type="scientific">Escherichia coli O8 (strain IAI1)</name>
    <dbReference type="NCBI Taxonomy" id="585034"/>
    <lineage>
        <taxon>Bacteria</taxon>
        <taxon>Pseudomonadati</taxon>
        <taxon>Pseudomonadota</taxon>
        <taxon>Gammaproteobacteria</taxon>
        <taxon>Enterobacterales</taxon>
        <taxon>Enterobacteriaceae</taxon>
        <taxon>Escherichia</taxon>
    </lineage>
</organism>
<keyword id="KW-0378">Hydrolase</keyword>
<keyword id="KW-0479">Metal-binding</keyword>
<keyword id="KW-0862">Zinc</keyword>
<comment type="function">
    <text evidence="1">This enzyme scavenges exogenous and endogenous cytidine and 2'-deoxycytidine for UMP synthesis.</text>
</comment>
<comment type="catalytic activity">
    <reaction evidence="1">
        <text>cytidine + H2O + H(+) = uridine + NH4(+)</text>
        <dbReference type="Rhea" id="RHEA:16069"/>
        <dbReference type="ChEBI" id="CHEBI:15377"/>
        <dbReference type="ChEBI" id="CHEBI:15378"/>
        <dbReference type="ChEBI" id="CHEBI:16704"/>
        <dbReference type="ChEBI" id="CHEBI:17562"/>
        <dbReference type="ChEBI" id="CHEBI:28938"/>
        <dbReference type="EC" id="3.5.4.5"/>
    </reaction>
</comment>
<comment type="catalytic activity">
    <reaction evidence="1">
        <text>2'-deoxycytidine + H2O + H(+) = 2'-deoxyuridine + NH4(+)</text>
        <dbReference type="Rhea" id="RHEA:13433"/>
        <dbReference type="ChEBI" id="CHEBI:15377"/>
        <dbReference type="ChEBI" id="CHEBI:15378"/>
        <dbReference type="ChEBI" id="CHEBI:15698"/>
        <dbReference type="ChEBI" id="CHEBI:16450"/>
        <dbReference type="ChEBI" id="CHEBI:28938"/>
        <dbReference type="EC" id="3.5.4.5"/>
    </reaction>
</comment>
<comment type="cofactor">
    <cofactor evidence="1">
        <name>Zn(2+)</name>
        <dbReference type="ChEBI" id="CHEBI:29105"/>
    </cofactor>
    <text evidence="1">Binds 1 zinc ion.</text>
</comment>
<comment type="subunit">
    <text evidence="1">Homodimer.</text>
</comment>
<comment type="similarity">
    <text evidence="1">Belongs to the cytidine and deoxycytidylate deaminase family.</text>
</comment>
<name>CDD_ECO8A</name>
<protein>
    <recommendedName>
        <fullName evidence="1">Cytidine deaminase</fullName>
        <ecNumber evidence="1">3.5.4.5</ecNumber>
    </recommendedName>
    <alternativeName>
        <fullName evidence="1">Cytidine aminohydrolase</fullName>
        <shortName evidence="1">CDA</shortName>
    </alternativeName>
</protein>
<gene>
    <name evidence="1" type="primary">cdd</name>
    <name type="ordered locus">ECIAI1_2220</name>
</gene>
<accession>B7M4Y8</accession>
<feature type="chain" id="PRO_1000147098" description="Cytidine deaminase">
    <location>
        <begin position="1"/>
        <end position="294"/>
    </location>
</feature>
<feature type="domain" description="CMP/dCMP-type deaminase 1" evidence="2">
    <location>
        <begin position="48"/>
        <end position="168"/>
    </location>
</feature>
<feature type="domain" description="CMP/dCMP-type deaminase 2" evidence="2">
    <location>
        <begin position="186"/>
        <end position="294"/>
    </location>
</feature>
<feature type="active site" description="Proton donor" evidence="1">
    <location>
        <position position="104"/>
    </location>
</feature>
<feature type="binding site" evidence="1">
    <location>
        <begin position="89"/>
        <end position="91"/>
    </location>
    <ligand>
        <name>substrate</name>
    </ligand>
</feature>
<feature type="binding site" evidence="1">
    <location>
        <position position="102"/>
    </location>
    <ligand>
        <name>Zn(2+)</name>
        <dbReference type="ChEBI" id="CHEBI:29105"/>
        <note>catalytic</note>
    </ligand>
</feature>
<feature type="binding site" evidence="1">
    <location>
        <position position="129"/>
    </location>
    <ligand>
        <name>Zn(2+)</name>
        <dbReference type="ChEBI" id="CHEBI:29105"/>
        <note>catalytic</note>
    </ligand>
</feature>
<feature type="binding site" evidence="1">
    <location>
        <position position="132"/>
    </location>
    <ligand>
        <name>Zn(2+)</name>
        <dbReference type="ChEBI" id="CHEBI:29105"/>
        <note>catalytic</note>
    </ligand>
</feature>